<sequence length="271" mass="31306">MLVVAAMRVWNPEEGWANRVGRKREGKIVEILRRVTMTAHGLSHFPRQLLRMPRAALRKPNPALDLDSWLKTPEDLPATINSQTLFGNDQPLEIEVGSGKGLFIQTESDRRPEHNYFGIEIARKYAAHAAARLAKRERANAKMLAGDATPLFAVTDEGKRIEDGSLDGVHVYFPDPWWKKRHRKRRVLSHDNILNFSRCLRVGGRLHFWTDVLDYFELTVELIAEIAPELGVPLPETQRESTHDLDFHTHFERRSRKMGIPVYRVCYRKRS</sequence>
<feature type="chain" id="PRO_0000171382" description="tRNA (guanine-N(7)-)-methyltransferase">
    <location>
        <begin position="1"/>
        <end position="271"/>
    </location>
</feature>
<feature type="active site" evidence="1">
    <location>
        <position position="175"/>
    </location>
</feature>
<feature type="binding site" evidence="2">
    <location>
        <position position="95"/>
    </location>
    <ligand>
        <name>S-adenosyl-L-methionine</name>
        <dbReference type="ChEBI" id="CHEBI:59789"/>
    </ligand>
</feature>
<feature type="binding site" evidence="2">
    <location>
        <position position="120"/>
    </location>
    <ligand>
        <name>S-adenosyl-L-methionine</name>
        <dbReference type="ChEBI" id="CHEBI:59789"/>
    </ligand>
</feature>
<feature type="binding site" evidence="2">
    <location>
        <position position="147"/>
    </location>
    <ligand>
        <name>S-adenosyl-L-methionine</name>
        <dbReference type="ChEBI" id="CHEBI:59789"/>
    </ligand>
</feature>
<feature type="binding site" evidence="2">
    <location>
        <position position="175"/>
    </location>
    <ligand>
        <name>S-adenosyl-L-methionine</name>
        <dbReference type="ChEBI" id="CHEBI:59789"/>
    </ligand>
</feature>
<feature type="binding site" evidence="2">
    <location>
        <position position="179"/>
    </location>
    <ligand>
        <name>substrate</name>
    </ligand>
</feature>
<feature type="binding site" evidence="2">
    <location>
        <position position="211"/>
    </location>
    <ligand>
        <name>substrate</name>
    </ligand>
</feature>
<feature type="binding site" evidence="2">
    <location>
        <begin position="249"/>
        <end position="252"/>
    </location>
    <ligand>
        <name>substrate</name>
    </ligand>
</feature>
<comment type="function">
    <text evidence="2">Catalyzes the formation of N(7)-methylguanine at position 46 (m7G46) in tRNA.</text>
</comment>
<comment type="catalytic activity">
    <reaction evidence="2">
        <text>guanosine(46) in tRNA + S-adenosyl-L-methionine = N(7)-methylguanosine(46) in tRNA + S-adenosyl-L-homocysteine</text>
        <dbReference type="Rhea" id="RHEA:42708"/>
        <dbReference type="Rhea" id="RHEA-COMP:10188"/>
        <dbReference type="Rhea" id="RHEA-COMP:10189"/>
        <dbReference type="ChEBI" id="CHEBI:57856"/>
        <dbReference type="ChEBI" id="CHEBI:59789"/>
        <dbReference type="ChEBI" id="CHEBI:74269"/>
        <dbReference type="ChEBI" id="CHEBI:74480"/>
        <dbReference type="EC" id="2.1.1.33"/>
    </reaction>
</comment>
<comment type="pathway">
    <text evidence="2">tRNA modification; N(7)-methylguanine-tRNA biosynthesis.</text>
</comment>
<comment type="similarity">
    <text evidence="2">Belongs to the class I-like SAM-binding methyltransferase superfamily. TrmB family.</text>
</comment>
<gene>
    <name evidence="2" type="primary">trmB</name>
    <name type="ordered locus">RB7807</name>
</gene>
<proteinExistence type="inferred from homology"/>
<accession>Q7UN36</accession>
<evidence type="ECO:0000250" key="1"/>
<evidence type="ECO:0000255" key="2">
    <source>
        <dbReference type="HAMAP-Rule" id="MF_01057"/>
    </source>
</evidence>
<protein>
    <recommendedName>
        <fullName evidence="2">tRNA (guanine-N(7)-)-methyltransferase</fullName>
        <ecNumber evidence="2">2.1.1.33</ecNumber>
    </recommendedName>
    <alternativeName>
        <fullName evidence="2">tRNA (guanine(46)-N(7))-methyltransferase</fullName>
    </alternativeName>
    <alternativeName>
        <fullName evidence="2">tRNA(m7G46)-methyltransferase</fullName>
    </alternativeName>
</protein>
<keyword id="KW-0489">Methyltransferase</keyword>
<keyword id="KW-1185">Reference proteome</keyword>
<keyword id="KW-0949">S-adenosyl-L-methionine</keyword>
<keyword id="KW-0808">Transferase</keyword>
<keyword id="KW-0819">tRNA processing</keyword>
<name>TRMB_RHOBA</name>
<reference key="1">
    <citation type="journal article" date="2003" name="Proc. Natl. Acad. Sci. U.S.A.">
        <title>Complete genome sequence of the marine planctomycete Pirellula sp. strain 1.</title>
        <authorList>
            <person name="Gloeckner F.O."/>
            <person name="Kube M."/>
            <person name="Bauer M."/>
            <person name="Teeling H."/>
            <person name="Lombardot T."/>
            <person name="Ludwig W."/>
            <person name="Gade D."/>
            <person name="Beck A."/>
            <person name="Borzym K."/>
            <person name="Heitmann K."/>
            <person name="Rabus R."/>
            <person name="Schlesner H."/>
            <person name="Amann R."/>
            <person name="Reinhardt R."/>
        </authorList>
    </citation>
    <scope>NUCLEOTIDE SEQUENCE [LARGE SCALE GENOMIC DNA]</scope>
    <source>
        <strain>DSM 10527 / NCIMB 13988 / SH1</strain>
    </source>
</reference>
<organism>
    <name type="scientific">Rhodopirellula baltica (strain DSM 10527 / NCIMB 13988 / SH1)</name>
    <dbReference type="NCBI Taxonomy" id="243090"/>
    <lineage>
        <taxon>Bacteria</taxon>
        <taxon>Pseudomonadati</taxon>
        <taxon>Planctomycetota</taxon>
        <taxon>Planctomycetia</taxon>
        <taxon>Pirellulales</taxon>
        <taxon>Pirellulaceae</taxon>
        <taxon>Rhodopirellula</taxon>
    </lineage>
</organism>
<dbReference type="EC" id="2.1.1.33" evidence="2"/>
<dbReference type="EMBL" id="BX294146">
    <property type="protein sequence ID" value="CAD75583.1"/>
    <property type="molecule type" value="Genomic_DNA"/>
</dbReference>
<dbReference type="RefSeq" id="NP_868036.1">
    <property type="nucleotide sequence ID" value="NC_005027.1"/>
</dbReference>
<dbReference type="SMR" id="Q7UN36"/>
<dbReference type="FunCoup" id="Q7UN36">
    <property type="interactions" value="318"/>
</dbReference>
<dbReference type="STRING" id="243090.RB7807"/>
<dbReference type="EnsemblBacteria" id="CAD75583">
    <property type="protein sequence ID" value="CAD75583"/>
    <property type="gene ID" value="RB7807"/>
</dbReference>
<dbReference type="KEGG" id="rba:RB7807"/>
<dbReference type="PATRIC" id="fig|243090.15.peg.3769"/>
<dbReference type="eggNOG" id="COG0220">
    <property type="taxonomic scope" value="Bacteria"/>
</dbReference>
<dbReference type="HOGENOM" id="CLU_050910_2_0_0"/>
<dbReference type="InParanoid" id="Q7UN36"/>
<dbReference type="OrthoDB" id="9802090at2"/>
<dbReference type="UniPathway" id="UPA00989"/>
<dbReference type="Proteomes" id="UP000001025">
    <property type="component" value="Chromosome"/>
</dbReference>
<dbReference type="GO" id="GO:0043527">
    <property type="term" value="C:tRNA methyltransferase complex"/>
    <property type="evidence" value="ECO:0000318"/>
    <property type="project" value="GO_Central"/>
</dbReference>
<dbReference type="GO" id="GO:0008176">
    <property type="term" value="F:tRNA (guanine(46)-N7)-methyltransferase activity"/>
    <property type="evidence" value="ECO:0000318"/>
    <property type="project" value="GO_Central"/>
</dbReference>
<dbReference type="GO" id="GO:0036265">
    <property type="term" value="P:RNA (guanine-N7)-methylation"/>
    <property type="evidence" value="ECO:0000318"/>
    <property type="project" value="GO_Central"/>
</dbReference>
<dbReference type="GO" id="GO:0030488">
    <property type="term" value="P:tRNA methylation"/>
    <property type="evidence" value="ECO:0000318"/>
    <property type="project" value="GO_Central"/>
</dbReference>
<dbReference type="CDD" id="cd02440">
    <property type="entry name" value="AdoMet_MTases"/>
    <property type="match status" value="1"/>
</dbReference>
<dbReference type="Gene3D" id="3.40.50.150">
    <property type="entry name" value="Vaccinia Virus protein VP39"/>
    <property type="match status" value="1"/>
</dbReference>
<dbReference type="HAMAP" id="MF_01057">
    <property type="entry name" value="tRNA_methyltr_TrmB"/>
    <property type="match status" value="1"/>
</dbReference>
<dbReference type="InterPro" id="IPR029063">
    <property type="entry name" value="SAM-dependent_MTases_sf"/>
</dbReference>
<dbReference type="InterPro" id="IPR003358">
    <property type="entry name" value="tRNA_(Gua-N-7)_MeTrfase_Trmb"/>
</dbReference>
<dbReference type="InterPro" id="IPR055361">
    <property type="entry name" value="tRNA_methyltr_TrmB_bact"/>
</dbReference>
<dbReference type="NCBIfam" id="TIGR00091">
    <property type="entry name" value="tRNA (guanosine(46)-N7)-methyltransferase TrmB"/>
    <property type="match status" value="1"/>
</dbReference>
<dbReference type="PANTHER" id="PTHR23417">
    <property type="entry name" value="3-DEOXY-D-MANNO-OCTULOSONIC-ACID TRANSFERASE/TRNA GUANINE-N 7 - -METHYLTRANSFERASE"/>
    <property type="match status" value="1"/>
</dbReference>
<dbReference type="PANTHER" id="PTHR23417:SF14">
    <property type="entry name" value="PENTACOTRIPEPTIDE-REPEAT REGION OF PRORP DOMAIN-CONTAINING PROTEIN"/>
    <property type="match status" value="1"/>
</dbReference>
<dbReference type="Pfam" id="PF02390">
    <property type="entry name" value="Methyltransf_4"/>
    <property type="match status" value="1"/>
</dbReference>
<dbReference type="SUPFAM" id="SSF53335">
    <property type="entry name" value="S-adenosyl-L-methionine-dependent methyltransferases"/>
    <property type="match status" value="1"/>
</dbReference>
<dbReference type="PROSITE" id="PS51625">
    <property type="entry name" value="SAM_MT_TRMB"/>
    <property type="match status" value="1"/>
</dbReference>